<proteinExistence type="inferred from homology"/>
<accession>P0CE09</accession>
<accession>O84317</accession>
<dbReference type="EC" id="2.7.7.6" evidence="1"/>
<dbReference type="EMBL" id="AE001273">
    <property type="protein sequence ID" value="AAC67908.1"/>
    <property type="molecule type" value="Genomic_DNA"/>
</dbReference>
<dbReference type="PIR" id="H71529">
    <property type="entry name" value="H71529"/>
</dbReference>
<dbReference type="RefSeq" id="NP_219820.1">
    <property type="nucleotide sequence ID" value="NC_000117.1"/>
</dbReference>
<dbReference type="RefSeq" id="WP_010725157.1">
    <property type="nucleotide sequence ID" value="NC_000117.1"/>
</dbReference>
<dbReference type="SMR" id="P0CE09"/>
<dbReference type="FunCoup" id="P0CE09">
    <property type="interactions" value="250"/>
</dbReference>
<dbReference type="IntAct" id="P0CE09">
    <property type="interactions" value="1"/>
</dbReference>
<dbReference type="STRING" id="272561.CT_315"/>
<dbReference type="EnsemblBacteria" id="AAC67908">
    <property type="protein sequence ID" value="AAC67908"/>
    <property type="gene ID" value="CT_315"/>
</dbReference>
<dbReference type="GeneID" id="884809"/>
<dbReference type="KEGG" id="ctr:CT_315"/>
<dbReference type="PATRIC" id="fig|272561.5.peg.337"/>
<dbReference type="HOGENOM" id="CLU_000524_4_1_0"/>
<dbReference type="InParanoid" id="P0CE09"/>
<dbReference type="OrthoDB" id="9803954at2"/>
<dbReference type="Proteomes" id="UP000000431">
    <property type="component" value="Chromosome"/>
</dbReference>
<dbReference type="GO" id="GO:0000428">
    <property type="term" value="C:DNA-directed RNA polymerase complex"/>
    <property type="evidence" value="ECO:0007669"/>
    <property type="project" value="UniProtKB-KW"/>
</dbReference>
<dbReference type="GO" id="GO:0003677">
    <property type="term" value="F:DNA binding"/>
    <property type="evidence" value="ECO:0007669"/>
    <property type="project" value="UniProtKB-UniRule"/>
</dbReference>
<dbReference type="GO" id="GO:0003899">
    <property type="term" value="F:DNA-directed RNA polymerase activity"/>
    <property type="evidence" value="ECO:0007669"/>
    <property type="project" value="UniProtKB-UniRule"/>
</dbReference>
<dbReference type="GO" id="GO:0032549">
    <property type="term" value="F:ribonucleoside binding"/>
    <property type="evidence" value="ECO:0007669"/>
    <property type="project" value="InterPro"/>
</dbReference>
<dbReference type="GO" id="GO:0006351">
    <property type="term" value="P:DNA-templated transcription"/>
    <property type="evidence" value="ECO:0007669"/>
    <property type="project" value="UniProtKB-UniRule"/>
</dbReference>
<dbReference type="CDD" id="cd00653">
    <property type="entry name" value="RNA_pol_B_RPB2"/>
    <property type="match status" value="1"/>
</dbReference>
<dbReference type="FunFam" id="3.90.1800.10:FF:000001">
    <property type="entry name" value="DNA-directed RNA polymerase subunit beta"/>
    <property type="match status" value="1"/>
</dbReference>
<dbReference type="Gene3D" id="2.40.50.100">
    <property type="match status" value="1"/>
</dbReference>
<dbReference type="Gene3D" id="2.40.50.150">
    <property type="match status" value="1"/>
</dbReference>
<dbReference type="Gene3D" id="3.90.1100.10">
    <property type="match status" value="1"/>
</dbReference>
<dbReference type="Gene3D" id="2.40.270.10">
    <property type="entry name" value="DNA-directed RNA polymerase, subunit 2, domain 6"/>
    <property type="match status" value="3"/>
</dbReference>
<dbReference type="Gene3D" id="3.90.1800.10">
    <property type="entry name" value="RNA polymerase alpha subunit dimerisation domain"/>
    <property type="match status" value="1"/>
</dbReference>
<dbReference type="Gene3D" id="3.90.1110.10">
    <property type="entry name" value="RNA polymerase Rpb2, domain 2"/>
    <property type="match status" value="1"/>
</dbReference>
<dbReference type="HAMAP" id="MF_01321">
    <property type="entry name" value="RNApol_bact_RpoB"/>
    <property type="match status" value="1"/>
</dbReference>
<dbReference type="InterPro" id="IPR019462">
    <property type="entry name" value="DNA-dir_RNA_pol_bsu_external_1"/>
</dbReference>
<dbReference type="InterPro" id="IPR015712">
    <property type="entry name" value="DNA-dir_RNA_pol_su2"/>
</dbReference>
<dbReference type="InterPro" id="IPR007120">
    <property type="entry name" value="DNA-dir_RNAP_su2_dom"/>
</dbReference>
<dbReference type="InterPro" id="IPR037033">
    <property type="entry name" value="DNA-dir_RNAP_su2_hyb_sf"/>
</dbReference>
<dbReference type="InterPro" id="IPR010243">
    <property type="entry name" value="RNA_pol_bsu_bac"/>
</dbReference>
<dbReference type="InterPro" id="IPR007121">
    <property type="entry name" value="RNA_pol_bsu_CS"/>
</dbReference>
<dbReference type="InterPro" id="IPR007644">
    <property type="entry name" value="RNA_pol_bsu_protrusion"/>
</dbReference>
<dbReference type="InterPro" id="IPR007642">
    <property type="entry name" value="RNA_pol_Rpb2_2"/>
</dbReference>
<dbReference type="InterPro" id="IPR037034">
    <property type="entry name" value="RNA_pol_Rpb2_2_sf"/>
</dbReference>
<dbReference type="InterPro" id="IPR007645">
    <property type="entry name" value="RNA_pol_Rpb2_3"/>
</dbReference>
<dbReference type="InterPro" id="IPR007641">
    <property type="entry name" value="RNA_pol_Rpb2_7"/>
</dbReference>
<dbReference type="InterPro" id="IPR014724">
    <property type="entry name" value="RNA_pol_RPB2_OB-fold"/>
</dbReference>
<dbReference type="NCBIfam" id="NF001616">
    <property type="entry name" value="PRK00405.1"/>
    <property type="match status" value="1"/>
</dbReference>
<dbReference type="NCBIfam" id="TIGR02013">
    <property type="entry name" value="rpoB"/>
    <property type="match status" value="1"/>
</dbReference>
<dbReference type="PANTHER" id="PTHR20856">
    <property type="entry name" value="DNA-DIRECTED RNA POLYMERASE I SUBUNIT 2"/>
    <property type="match status" value="1"/>
</dbReference>
<dbReference type="Pfam" id="PF04563">
    <property type="entry name" value="RNA_pol_Rpb2_1"/>
    <property type="match status" value="1"/>
</dbReference>
<dbReference type="Pfam" id="PF04561">
    <property type="entry name" value="RNA_pol_Rpb2_2"/>
    <property type="match status" value="1"/>
</dbReference>
<dbReference type="Pfam" id="PF04565">
    <property type="entry name" value="RNA_pol_Rpb2_3"/>
    <property type="match status" value="1"/>
</dbReference>
<dbReference type="Pfam" id="PF10385">
    <property type="entry name" value="RNA_pol_Rpb2_45"/>
    <property type="match status" value="1"/>
</dbReference>
<dbReference type="Pfam" id="PF00562">
    <property type="entry name" value="RNA_pol_Rpb2_6"/>
    <property type="match status" value="1"/>
</dbReference>
<dbReference type="Pfam" id="PF04560">
    <property type="entry name" value="RNA_pol_Rpb2_7"/>
    <property type="match status" value="1"/>
</dbReference>
<dbReference type="SUPFAM" id="SSF64484">
    <property type="entry name" value="beta and beta-prime subunits of DNA dependent RNA-polymerase"/>
    <property type="match status" value="1"/>
</dbReference>
<dbReference type="PROSITE" id="PS01166">
    <property type="entry name" value="RNA_POL_BETA"/>
    <property type="match status" value="1"/>
</dbReference>
<keyword id="KW-0240">DNA-directed RNA polymerase</keyword>
<keyword id="KW-0548">Nucleotidyltransferase</keyword>
<keyword id="KW-1185">Reference proteome</keyword>
<keyword id="KW-0804">Transcription</keyword>
<keyword id="KW-0808">Transferase</keyword>
<gene>
    <name evidence="1" type="primary">rpoB</name>
    <name type="ordered locus">CT_315</name>
</gene>
<organism>
    <name type="scientific">Chlamydia trachomatis serovar D (strain ATCC VR-885 / DSM 19411 / UW-3/Cx)</name>
    <dbReference type="NCBI Taxonomy" id="272561"/>
    <lineage>
        <taxon>Bacteria</taxon>
        <taxon>Pseudomonadati</taxon>
        <taxon>Chlamydiota</taxon>
        <taxon>Chlamydiia</taxon>
        <taxon>Chlamydiales</taxon>
        <taxon>Chlamydiaceae</taxon>
        <taxon>Chlamydia/Chlamydophila group</taxon>
        <taxon>Chlamydia</taxon>
    </lineage>
</organism>
<reference key="1">
    <citation type="journal article" date="1998" name="Science">
        <title>Genome sequence of an obligate intracellular pathogen of humans: Chlamydia trachomatis.</title>
        <authorList>
            <person name="Stephens R.S."/>
            <person name="Kalman S."/>
            <person name="Lammel C.J."/>
            <person name="Fan J."/>
            <person name="Marathe R."/>
            <person name="Aravind L."/>
            <person name="Mitchell W.P."/>
            <person name="Olinger L."/>
            <person name="Tatusov R.L."/>
            <person name="Zhao Q."/>
            <person name="Koonin E.V."/>
            <person name="Davis R.W."/>
        </authorList>
    </citation>
    <scope>NUCLEOTIDE SEQUENCE [LARGE SCALE GENOMIC DNA]</scope>
    <source>
        <strain>ATCC VR-885 / DSM 19411 / UW-3/Cx</strain>
    </source>
</reference>
<sequence length="1252" mass="140115">MFKCPERVSIKKKEDILDLPNLVEVQIKSYKQFLQIGKLAEERENIGLEEVFREIFPIKSYNEATILEYLSYNLGVPKYSPEECIRRGITYSVTLKVRFRLTDETGIKEEEVYMGTIPIMTDKGTFIINGAERVVVSQVHRSPGINFEQEKHSKGNVLFSFRIIPYRGSWLEAVFDINDLIYIHIDRKKRRRKILAMTFIRALGYSTDADIIEEFFSVEERSLRLEKDFVALVGKVLADNVVDADSSLVYGKAGEKLSTAMLKRILDAGVQSLKIAVGADENHPIIKMLAKDPTDSYEAALKDFYRRLRPGEPATLVNARSTIMRLFFDAKRYNLGRVGRYKLNKKLGFPLDDETLSQVTLRKEDVIGALKYLIRLRMGDEKTSIDDIDHLANRRVRSVGELIQNHCRSGLARMEKIVRERMNLFDFSSDTLTPGKIISAKGLVSVLKDFFSRSQLSQFMDQTNPVAELTHKRRLSALGPGGLNRERAGFEVRDVHASHYGRICPIETPEGPNIGLITSLSSFAKINEFGFIETPYRVVRDGIVTDEIEYMTADVEEECVIAQASAELDEYDMFKTPVCWARYKGEAFEADTSTVTHMDVSPKQLVSVVTGLIPFLEHDDANRALMGSNMQRQAVPLLKTEAAIVGTGLEGRAAKDSGAIIVAQEDGVVEYVDSYEIVVAKKNNPTLKDRYQLKKFLRSNSGTCINQTPLCSVGDVVTHGDVLADGPATDKGELALGKNVLVAFMPWYGYNFEDAIIISERLIKQDAYTSIYIEEFELTARDTKLGKEEITRDIPNVSEEVLANLGEDGVVRIGAEVKPGDILVGKITPKSETELAPEERLLRAIFGEKAADVKDASLTVPPGTEGVVMDVKVFSRKDRLSKSDDELVEEAVHLKDLQKEYKSQLAQLKVEHREKLGALLLNEKAPAAIIHRRSADILVQEGAIFDQETIELLERESLVDLLMAPCDMYDVLKDILSSYETAVQRLEVNYKTEAEHIKEGDADLDHGVIRQVKVYVASKRKLQVGDKMAGRHGNKGVVSKIVPEADMPFLANGETVQMILNPLGVPSRMNLGQVLETHLGYAAKTAGIYVKTPVFEGFPESRIWDMMIEQGLPEDGKSYLFDGKTGERFDSKVVVGYIYMLKLSHLIADKIHARSIGPYSLVTQQPLGGKAQMGGQRFGEMEVWALEAYGVAHMLQEILTVKSDDVSGRTRIYESIVKGENLLRSGTPESFNVLIKEMQGLGLDVRPMVVDA</sequence>
<evidence type="ECO:0000255" key="1">
    <source>
        <dbReference type="HAMAP-Rule" id="MF_01321"/>
    </source>
</evidence>
<feature type="chain" id="PRO_0000047882" description="DNA-directed RNA polymerase subunit beta">
    <location>
        <begin position="1"/>
        <end position="1252"/>
    </location>
</feature>
<name>RPOB_CHLTR</name>
<comment type="function">
    <text evidence="1">DNA-dependent RNA polymerase catalyzes the transcription of DNA into RNA using the four ribonucleoside triphosphates as substrates.</text>
</comment>
<comment type="catalytic activity">
    <reaction evidence="1">
        <text>RNA(n) + a ribonucleoside 5'-triphosphate = RNA(n+1) + diphosphate</text>
        <dbReference type="Rhea" id="RHEA:21248"/>
        <dbReference type="Rhea" id="RHEA-COMP:14527"/>
        <dbReference type="Rhea" id="RHEA-COMP:17342"/>
        <dbReference type="ChEBI" id="CHEBI:33019"/>
        <dbReference type="ChEBI" id="CHEBI:61557"/>
        <dbReference type="ChEBI" id="CHEBI:140395"/>
        <dbReference type="EC" id="2.7.7.6"/>
    </reaction>
</comment>
<comment type="subunit">
    <text evidence="1">The RNAP catalytic core consists of 2 alpha, 1 beta, 1 beta' and 1 omega subunit. When a sigma factor is associated with the core the holoenzyme is formed, which can initiate transcription.</text>
</comment>
<comment type="similarity">
    <text evidence="1">Belongs to the RNA polymerase beta chain family.</text>
</comment>
<protein>
    <recommendedName>
        <fullName evidence="1">DNA-directed RNA polymerase subunit beta</fullName>
        <shortName evidence="1">RNAP subunit beta</shortName>
        <ecNumber evidence="1">2.7.7.6</ecNumber>
    </recommendedName>
    <alternativeName>
        <fullName evidence="1">RNA polymerase subunit beta</fullName>
    </alternativeName>
    <alternativeName>
        <fullName evidence="1">Transcriptase subunit beta</fullName>
    </alternativeName>
</protein>